<feature type="chain" id="PRO_0000139179" description="Methionine--tRNA ligase">
    <location>
        <begin position="1"/>
        <end position="702"/>
    </location>
</feature>
<feature type="domain" description="tRNA-binding" evidence="1">
    <location>
        <begin position="599"/>
        <end position="702"/>
    </location>
</feature>
<feature type="region of interest" description="Disordered" evidence="2">
    <location>
        <begin position="562"/>
        <end position="593"/>
    </location>
</feature>
<feature type="short sequence motif" description="'HIGH' region">
    <location>
        <begin position="23"/>
        <end position="33"/>
    </location>
</feature>
<feature type="short sequence motif" description="'KMSKS' region">
    <location>
        <begin position="341"/>
        <end position="345"/>
    </location>
</feature>
<feature type="compositionally biased region" description="Polar residues" evidence="2">
    <location>
        <begin position="569"/>
        <end position="578"/>
    </location>
</feature>
<feature type="binding site" evidence="1">
    <location>
        <position position="154"/>
    </location>
    <ligand>
        <name>Zn(2+)</name>
        <dbReference type="ChEBI" id="CHEBI:29105"/>
    </ligand>
</feature>
<feature type="binding site" evidence="1">
    <location>
        <position position="157"/>
    </location>
    <ligand>
        <name>Zn(2+)</name>
        <dbReference type="ChEBI" id="CHEBI:29105"/>
    </ligand>
</feature>
<feature type="binding site" evidence="1">
    <location>
        <position position="167"/>
    </location>
    <ligand>
        <name>Zn(2+)</name>
        <dbReference type="ChEBI" id="CHEBI:29105"/>
    </ligand>
</feature>
<feature type="binding site" evidence="1">
    <location>
        <position position="170"/>
    </location>
    <ligand>
        <name>Zn(2+)</name>
        <dbReference type="ChEBI" id="CHEBI:29105"/>
    </ligand>
</feature>
<feature type="binding site" evidence="1">
    <location>
        <position position="344"/>
    </location>
    <ligand>
        <name>ATP</name>
        <dbReference type="ChEBI" id="CHEBI:30616"/>
    </ligand>
</feature>
<gene>
    <name evidence="1" type="primary">metG</name>
    <name type="ordered locus">PD_1590</name>
</gene>
<evidence type="ECO:0000255" key="1">
    <source>
        <dbReference type="HAMAP-Rule" id="MF_00098"/>
    </source>
</evidence>
<evidence type="ECO:0000256" key="2">
    <source>
        <dbReference type="SAM" id="MobiDB-lite"/>
    </source>
</evidence>
<accession>Q87B68</accession>
<keyword id="KW-0030">Aminoacyl-tRNA synthetase</keyword>
<keyword id="KW-0067">ATP-binding</keyword>
<keyword id="KW-0963">Cytoplasm</keyword>
<keyword id="KW-0436">Ligase</keyword>
<keyword id="KW-0479">Metal-binding</keyword>
<keyword id="KW-0547">Nucleotide-binding</keyword>
<keyword id="KW-0648">Protein biosynthesis</keyword>
<keyword id="KW-1185">Reference proteome</keyword>
<keyword id="KW-0694">RNA-binding</keyword>
<keyword id="KW-0820">tRNA-binding</keyword>
<keyword id="KW-0862">Zinc</keyword>
<proteinExistence type="inferred from homology"/>
<reference key="1">
    <citation type="journal article" date="2003" name="J. Bacteriol.">
        <title>Comparative analyses of the complete genome sequences of Pierce's disease and citrus variegated chlorosis strains of Xylella fastidiosa.</title>
        <authorList>
            <person name="Van Sluys M.A."/>
            <person name="de Oliveira M.C."/>
            <person name="Monteiro-Vitorello C.B."/>
            <person name="Miyaki C.Y."/>
            <person name="Furlan L.R."/>
            <person name="Camargo L.E.A."/>
            <person name="da Silva A.C.R."/>
            <person name="Moon D.H."/>
            <person name="Takita M.A."/>
            <person name="Lemos E.G.M."/>
            <person name="Machado M.A."/>
            <person name="Ferro M.I.T."/>
            <person name="da Silva F.R."/>
            <person name="Goldman M.H.S."/>
            <person name="Goldman G.H."/>
            <person name="Lemos M.V.F."/>
            <person name="El-Dorry H."/>
            <person name="Tsai S.M."/>
            <person name="Carrer H."/>
            <person name="Carraro D.M."/>
            <person name="de Oliveira R.C."/>
            <person name="Nunes L.R."/>
            <person name="Siqueira W.J."/>
            <person name="Coutinho L.L."/>
            <person name="Kimura E.T."/>
            <person name="Ferro E.S."/>
            <person name="Harakava R."/>
            <person name="Kuramae E.E."/>
            <person name="Marino C.L."/>
            <person name="Giglioti E."/>
            <person name="Abreu I.L."/>
            <person name="Alves L.M.C."/>
            <person name="do Amaral A.M."/>
            <person name="Baia G.S."/>
            <person name="Blanco S.R."/>
            <person name="Brito M.S."/>
            <person name="Cannavan F.S."/>
            <person name="Celestino A.V."/>
            <person name="da Cunha A.F."/>
            <person name="Fenille R.C."/>
            <person name="Ferro J.A."/>
            <person name="Formighieri E.F."/>
            <person name="Kishi L.T."/>
            <person name="Leoni S.G."/>
            <person name="Oliveira A.R."/>
            <person name="Rosa V.E. Jr."/>
            <person name="Sassaki F.T."/>
            <person name="Sena J.A.D."/>
            <person name="de Souza A.A."/>
            <person name="Truffi D."/>
            <person name="Tsukumo F."/>
            <person name="Yanai G.M."/>
            <person name="Zaros L.G."/>
            <person name="Civerolo E.L."/>
            <person name="Simpson A.J.G."/>
            <person name="Almeida N.F. Jr."/>
            <person name="Setubal J.C."/>
            <person name="Kitajima J.P."/>
        </authorList>
    </citation>
    <scope>NUCLEOTIDE SEQUENCE [LARGE SCALE GENOMIC DNA]</scope>
    <source>
        <strain>Temecula1 / ATCC 700964</strain>
    </source>
</reference>
<name>SYM_XYLFT</name>
<sequence length="702" mass="77526">MRYSHPLVPLSFMTTALVTTALPYANGPLHLGHLVGYIQADIWVRARRLGGHNTWFVCADDTHGTPIMLAAEKAGMPPEAFIATTQASHERDFAAFNVAFDHYDSTHSPVNRHLTEQSYLTLKQAGHITCRSVAQFYDPAKGMFLPDRYVKGTCPNCGATDQYGDNCEACGATYDPTELKNPYSVISGATPELRDSEHFFFEVAHFDTFLRHWLSGDVALPSVKNKLKEWLDAKGGLRPWDISRDAPYFGFKIPDQPGKYFYVWLDAPIGYLCSFKTLCTRIGEDFDTHLRSGTTTELHHFIGKDIVNFHALFWPAVLHGTGHRAPTRLHVNGYLTVDGAKMSKSRGTFIMARTYLDAGLEPDALRYYFAAKSSGDVDDLDLNLSDFVARVNADLVGKLVNLASRCASFIGTRFNGQLADTLPDRIQYDRFVAALTPIRDAYERNDTASAIRQTMQLADEANKYIDETKPWIIAKQHHADAQLHAVCTQGLNLFRVLITALKPILPHTSIQAETFLAAPVTAWQDVNQPLTGGHTIQPYSPLFTRIDKKIIEVMINASKDTLAPPPASAKQQNASMSNTAPPPTAEEPETTAPTIGIDDFAKLDLRIGKVLVCEYVEGSDKLLRFELDAGPLGKRQIFSGIRASYSNPEALIGRNVVFIANLAPRKMRFGISQGMILSAGFDNGTLALLDADSSAQPGMPVR</sequence>
<protein>
    <recommendedName>
        <fullName evidence="1">Methionine--tRNA ligase</fullName>
        <ecNumber evidence="1">6.1.1.10</ecNumber>
    </recommendedName>
    <alternativeName>
        <fullName evidence="1">Methionyl-tRNA synthetase</fullName>
        <shortName evidence="1">MetRS</shortName>
    </alternativeName>
</protein>
<dbReference type="EC" id="6.1.1.10" evidence="1"/>
<dbReference type="EMBL" id="AE009442">
    <property type="protein sequence ID" value="AAO29432.1"/>
    <property type="molecule type" value="Genomic_DNA"/>
</dbReference>
<dbReference type="SMR" id="Q87B68"/>
<dbReference type="KEGG" id="xft:PD_1590"/>
<dbReference type="HOGENOM" id="CLU_009710_7_0_6"/>
<dbReference type="Proteomes" id="UP000002516">
    <property type="component" value="Chromosome"/>
</dbReference>
<dbReference type="GO" id="GO:0005829">
    <property type="term" value="C:cytosol"/>
    <property type="evidence" value="ECO:0007669"/>
    <property type="project" value="TreeGrafter"/>
</dbReference>
<dbReference type="GO" id="GO:0005524">
    <property type="term" value="F:ATP binding"/>
    <property type="evidence" value="ECO:0007669"/>
    <property type="project" value="UniProtKB-UniRule"/>
</dbReference>
<dbReference type="GO" id="GO:0046872">
    <property type="term" value="F:metal ion binding"/>
    <property type="evidence" value="ECO:0007669"/>
    <property type="project" value="UniProtKB-KW"/>
</dbReference>
<dbReference type="GO" id="GO:0004825">
    <property type="term" value="F:methionine-tRNA ligase activity"/>
    <property type="evidence" value="ECO:0007669"/>
    <property type="project" value="UniProtKB-UniRule"/>
</dbReference>
<dbReference type="GO" id="GO:0000049">
    <property type="term" value="F:tRNA binding"/>
    <property type="evidence" value="ECO:0007669"/>
    <property type="project" value="UniProtKB-KW"/>
</dbReference>
<dbReference type="GO" id="GO:0006431">
    <property type="term" value="P:methionyl-tRNA aminoacylation"/>
    <property type="evidence" value="ECO:0007669"/>
    <property type="project" value="UniProtKB-UniRule"/>
</dbReference>
<dbReference type="CDD" id="cd07957">
    <property type="entry name" value="Anticodon_Ia_Met"/>
    <property type="match status" value="1"/>
</dbReference>
<dbReference type="CDD" id="cd00814">
    <property type="entry name" value="MetRS_core"/>
    <property type="match status" value="1"/>
</dbReference>
<dbReference type="CDD" id="cd02800">
    <property type="entry name" value="tRNA_bind_EcMetRS_like"/>
    <property type="match status" value="1"/>
</dbReference>
<dbReference type="FunFam" id="1.10.730.10:FF:000005">
    <property type="entry name" value="Methionine--tRNA ligase"/>
    <property type="match status" value="1"/>
</dbReference>
<dbReference type="FunFam" id="2.20.28.20:FF:000001">
    <property type="entry name" value="Methionine--tRNA ligase"/>
    <property type="match status" value="1"/>
</dbReference>
<dbReference type="FunFam" id="2.40.50.140:FF:000042">
    <property type="entry name" value="Methionine--tRNA ligase"/>
    <property type="match status" value="1"/>
</dbReference>
<dbReference type="Gene3D" id="3.40.50.620">
    <property type="entry name" value="HUPs"/>
    <property type="match status" value="1"/>
</dbReference>
<dbReference type="Gene3D" id="1.10.730.10">
    <property type="entry name" value="Isoleucyl-tRNA Synthetase, Domain 1"/>
    <property type="match status" value="1"/>
</dbReference>
<dbReference type="Gene3D" id="2.20.28.20">
    <property type="entry name" value="Methionyl-tRNA synthetase, Zn-domain"/>
    <property type="match status" value="1"/>
</dbReference>
<dbReference type="Gene3D" id="2.40.50.140">
    <property type="entry name" value="Nucleic acid-binding proteins"/>
    <property type="match status" value="1"/>
</dbReference>
<dbReference type="HAMAP" id="MF_00098">
    <property type="entry name" value="Met_tRNA_synth_type1"/>
    <property type="match status" value="1"/>
</dbReference>
<dbReference type="InterPro" id="IPR001412">
    <property type="entry name" value="aa-tRNA-synth_I_CS"/>
</dbReference>
<dbReference type="InterPro" id="IPR041872">
    <property type="entry name" value="Anticodon_Met"/>
</dbReference>
<dbReference type="InterPro" id="IPR004495">
    <property type="entry name" value="Met-tRNA-synth_bsu_C"/>
</dbReference>
<dbReference type="InterPro" id="IPR023458">
    <property type="entry name" value="Met-tRNA_ligase_1"/>
</dbReference>
<dbReference type="InterPro" id="IPR014758">
    <property type="entry name" value="Met-tRNA_synth"/>
</dbReference>
<dbReference type="InterPro" id="IPR015413">
    <property type="entry name" value="Methionyl/Leucyl_tRNA_Synth"/>
</dbReference>
<dbReference type="InterPro" id="IPR033911">
    <property type="entry name" value="MetRS_core"/>
</dbReference>
<dbReference type="InterPro" id="IPR029038">
    <property type="entry name" value="MetRS_Zn"/>
</dbReference>
<dbReference type="InterPro" id="IPR012340">
    <property type="entry name" value="NA-bd_OB-fold"/>
</dbReference>
<dbReference type="InterPro" id="IPR014729">
    <property type="entry name" value="Rossmann-like_a/b/a_fold"/>
</dbReference>
<dbReference type="InterPro" id="IPR002547">
    <property type="entry name" value="tRNA-bd_dom"/>
</dbReference>
<dbReference type="InterPro" id="IPR009080">
    <property type="entry name" value="tRNAsynth_Ia_anticodon-bd"/>
</dbReference>
<dbReference type="NCBIfam" id="TIGR00398">
    <property type="entry name" value="metG"/>
    <property type="match status" value="1"/>
</dbReference>
<dbReference type="NCBIfam" id="TIGR00399">
    <property type="entry name" value="metG_C_term"/>
    <property type="match status" value="1"/>
</dbReference>
<dbReference type="NCBIfam" id="NF001100">
    <property type="entry name" value="PRK00133.1"/>
    <property type="match status" value="1"/>
</dbReference>
<dbReference type="PANTHER" id="PTHR45765">
    <property type="entry name" value="METHIONINE--TRNA LIGASE"/>
    <property type="match status" value="1"/>
</dbReference>
<dbReference type="PANTHER" id="PTHR45765:SF1">
    <property type="entry name" value="METHIONINE--TRNA LIGASE, CYTOPLASMIC"/>
    <property type="match status" value="1"/>
</dbReference>
<dbReference type="Pfam" id="PF19303">
    <property type="entry name" value="Anticodon_3"/>
    <property type="match status" value="1"/>
</dbReference>
<dbReference type="Pfam" id="PF09334">
    <property type="entry name" value="tRNA-synt_1g"/>
    <property type="match status" value="1"/>
</dbReference>
<dbReference type="Pfam" id="PF01588">
    <property type="entry name" value="tRNA_bind"/>
    <property type="match status" value="1"/>
</dbReference>
<dbReference type="PRINTS" id="PR01041">
    <property type="entry name" value="TRNASYNTHMET"/>
</dbReference>
<dbReference type="SUPFAM" id="SSF47323">
    <property type="entry name" value="Anticodon-binding domain of a subclass of class I aminoacyl-tRNA synthetases"/>
    <property type="match status" value="1"/>
</dbReference>
<dbReference type="SUPFAM" id="SSF57770">
    <property type="entry name" value="Methionyl-tRNA synthetase (MetRS), Zn-domain"/>
    <property type="match status" value="1"/>
</dbReference>
<dbReference type="SUPFAM" id="SSF50249">
    <property type="entry name" value="Nucleic acid-binding proteins"/>
    <property type="match status" value="1"/>
</dbReference>
<dbReference type="SUPFAM" id="SSF52374">
    <property type="entry name" value="Nucleotidylyl transferase"/>
    <property type="match status" value="1"/>
</dbReference>
<dbReference type="PROSITE" id="PS00178">
    <property type="entry name" value="AA_TRNA_LIGASE_I"/>
    <property type="match status" value="1"/>
</dbReference>
<dbReference type="PROSITE" id="PS50886">
    <property type="entry name" value="TRBD"/>
    <property type="match status" value="1"/>
</dbReference>
<organism>
    <name type="scientific">Xylella fastidiosa (strain Temecula1 / ATCC 700964)</name>
    <dbReference type="NCBI Taxonomy" id="183190"/>
    <lineage>
        <taxon>Bacteria</taxon>
        <taxon>Pseudomonadati</taxon>
        <taxon>Pseudomonadota</taxon>
        <taxon>Gammaproteobacteria</taxon>
        <taxon>Lysobacterales</taxon>
        <taxon>Lysobacteraceae</taxon>
        <taxon>Xylella</taxon>
    </lineage>
</organism>
<comment type="function">
    <text evidence="1">Is required not only for elongation of protein synthesis but also for the initiation of all mRNA translation through initiator tRNA(fMet) aminoacylation.</text>
</comment>
<comment type="catalytic activity">
    <reaction evidence="1">
        <text>tRNA(Met) + L-methionine + ATP = L-methionyl-tRNA(Met) + AMP + diphosphate</text>
        <dbReference type="Rhea" id="RHEA:13481"/>
        <dbReference type="Rhea" id="RHEA-COMP:9667"/>
        <dbReference type="Rhea" id="RHEA-COMP:9698"/>
        <dbReference type="ChEBI" id="CHEBI:30616"/>
        <dbReference type="ChEBI" id="CHEBI:33019"/>
        <dbReference type="ChEBI" id="CHEBI:57844"/>
        <dbReference type="ChEBI" id="CHEBI:78442"/>
        <dbReference type="ChEBI" id="CHEBI:78530"/>
        <dbReference type="ChEBI" id="CHEBI:456215"/>
        <dbReference type="EC" id="6.1.1.10"/>
    </reaction>
</comment>
<comment type="cofactor">
    <cofactor evidence="1">
        <name>Zn(2+)</name>
        <dbReference type="ChEBI" id="CHEBI:29105"/>
    </cofactor>
    <text evidence="1">Binds 1 zinc ion per subunit.</text>
</comment>
<comment type="subunit">
    <text evidence="1">Homodimer.</text>
</comment>
<comment type="subcellular location">
    <subcellularLocation>
        <location evidence="1">Cytoplasm</location>
    </subcellularLocation>
</comment>
<comment type="similarity">
    <text evidence="1">Belongs to the class-I aminoacyl-tRNA synthetase family. MetG type 1 subfamily.</text>
</comment>